<gene>
    <name evidence="1" type="primary">thrS</name>
    <name type="ordered locus">Reut_A1275</name>
</gene>
<dbReference type="EC" id="6.1.1.3" evidence="1"/>
<dbReference type="EMBL" id="CP000090">
    <property type="protein sequence ID" value="AAZ60646.1"/>
    <property type="molecule type" value="Genomic_DNA"/>
</dbReference>
<dbReference type="SMR" id="Q472N7"/>
<dbReference type="STRING" id="264198.Reut_A1275"/>
<dbReference type="KEGG" id="reu:Reut_A1275"/>
<dbReference type="eggNOG" id="COG0441">
    <property type="taxonomic scope" value="Bacteria"/>
</dbReference>
<dbReference type="HOGENOM" id="CLU_008554_0_1_4"/>
<dbReference type="OrthoDB" id="9802304at2"/>
<dbReference type="GO" id="GO:0005829">
    <property type="term" value="C:cytosol"/>
    <property type="evidence" value="ECO:0007669"/>
    <property type="project" value="TreeGrafter"/>
</dbReference>
<dbReference type="GO" id="GO:0005524">
    <property type="term" value="F:ATP binding"/>
    <property type="evidence" value="ECO:0007669"/>
    <property type="project" value="UniProtKB-UniRule"/>
</dbReference>
<dbReference type="GO" id="GO:0046872">
    <property type="term" value="F:metal ion binding"/>
    <property type="evidence" value="ECO:0007669"/>
    <property type="project" value="UniProtKB-KW"/>
</dbReference>
<dbReference type="GO" id="GO:0004829">
    <property type="term" value="F:threonine-tRNA ligase activity"/>
    <property type="evidence" value="ECO:0007669"/>
    <property type="project" value="UniProtKB-UniRule"/>
</dbReference>
<dbReference type="GO" id="GO:0000049">
    <property type="term" value="F:tRNA binding"/>
    <property type="evidence" value="ECO:0007669"/>
    <property type="project" value="UniProtKB-KW"/>
</dbReference>
<dbReference type="GO" id="GO:0006435">
    <property type="term" value="P:threonyl-tRNA aminoacylation"/>
    <property type="evidence" value="ECO:0007669"/>
    <property type="project" value="UniProtKB-UniRule"/>
</dbReference>
<dbReference type="CDD" id="cd01667">
    <property type="entry name" value="TGS_ThrRS"/>
    <property type="match status" value="1"/>
</dbReference>
<dbReference type="CDD" id="cd00860">
    <property type="entry name" value="ThrRS_anticodon"/>
    <property type="match status" value="1"/>
</dbReference>
<dbReference type="CDD" id="cd00771">
    <property type="entry name" value="ThrRS_core"/>
    <property type="match status" value="1"/>
</dbReference>
<dbReference type="FunFam" id="3.10.20.30:FF:000005">
    <property type="entry name" value="Threonine--tRNA ligase"/>
    <property type="match status" value="1"/>
</dbReference>
<dbReference type="FunFam" id="3.30.54.20:FF:000002">
    <property type="entry name" value="Threonine--tRNA ligase"/>
    <property type="match status" value="1"/>
</dbReference>
<dbReference type="FunFam" id="3.30.930.10:FF:000002">
    <property type="entry name" value="Threonine--tRNA ligase"/>
    <property type="match status" value="1"/>
</dbReference>
<dbReference type="FunFam" id="3.40.50.800:FF:000001">
    <property type="entry name" value="Threonine--tRNA ligase"/>
    <property type="match status" value="1"/>
</dbReference>
<dbReference type="FunFam" id="3.30.980.10:FF:000005">
    <property type="entry name" value="Threonyl-tRNA synthetase, mitochondrial"/>
    <property type="match status" value="1"/>
</dbReference>
<dbReference type="Gene3D" id="3.10.20.30">
    <property type="match status" value="1"/>
</dbReference>
<dbReference type="Gene3D" id="3.30.54.20">
    <property type="match status" value="1"/>
</dbReference>
<dbReference type="Gene3D" id="3.40.50.800">
    <property type="entry name" value="Anticodon-binding domain"/>
    <property type="match status" value="1"/>
</dbReference>
<dbReference type="Gene3D" id="3.30.930.10">
    <property type="entry name" value="Bira Bifunctional Protein, Domain 2"/>
    <property type="match status" value="1"/>
</dbReference>
<dbReference type="Gene3D" id="3.30.980.10">
    <property type="entry name" value="Threonyl-trna Synthetase, Chain A, domain 2"/>
    <property type="match status" value="1"/>
</dbReference>
<dbReference type="HAMAP" id="MF_00184">
    <property type="entry name" value="Thr_tRNA_synth"/>
    <property type="match status" value="1"/>
</dbReference>
<dbReference type="InterPro" id="IPR002314">
    <property type="entry name" value="aa-tRNA-synt_IIb"/>
</dbReference>
<dbReference type="InterPro" id="IPR006195">
    <property type="entry name" value="aa-tRNA-synth_II"/>
</dbReference>
<dbReference type="InterPro" id="IPR045864">
    <property type="entry name" value="aa-tRNA-synth_II/BPL/LPL"/>
</dbReference>
<dbReference type="InterPro" id="IPR004154">
    <property type="entry name" value="Anticodon-bd"/>
</dbReference>
<dbReference type="InterPro" id="IPR036621">
    <property type="entry name" value="Anticodon-bd_dom_sf"/>
</dbReference>
<dbReference type="InterPro" id="IPR012675">
    <property type="entry name" value="Beta-grasp_dom_sf"/>
</dbReference>
<dbReference type="InterPro" id="IPR004095">
    <property type="entry name" value="TGS"/>
</dbReference>
<dbReference type="InterPro" id="IPR012676">
    <property type="entry name" value="TGS-like"/>
</dbReference>
<dbReference type="InterPro" id="IPR002320">
    <property type="entry name" value="Thr-tRNA-ligase_IIa"/>
</dbReference>
<dbReference type="InterPro" id="IPR018163">
    <property type="entry name" value="Thr/Ala-tRNA-synth_IIc_edit"/>
</dbReference>
<dbReference type="InterPro" id="IPR047246">
    <property type="entry name" value="ThrRS_anticodon"/>
</dbReference>
<dbReference type="InterPro" id="IPR033728">
    <property type="entry name" value="ThrRS_core"/>
</dbReference>
<dbReference type="InterPro" id="IPR012947">
    <property type="entry name" value="tRNA_SAD"/>
</dbReference>
<dbReference type="NCBIfam" id="TIGR00418">
    <property type="entry name" value="thrS"/>
    <property type="match status" value="1"/>
</dbReference>
<dbReference type="PANTHER" id="PTHR11451:SF44">
    <property type="entry name" value="THREONINE--TRNA LIGASE, CHLOROPLASTIC_MITOCHONDRIAL 2"/>
    <property type="match status" value="1"/>
</dbReference>
<dbReference type="PANTHER" id="PTHR11451">
    <property type="entry name" value="THREONINE-TRNA LIGASE"/>
    <property type="match status" value="1"/>
</dbReference>
<dbReference type="Pfam" id="PF03129">
    <property type="entry name" value="HGTP_anticodon"/>
    <property type="match status" value="1"/>
</dbReference>
<dbReference type="Pfam" id="PF02824">
    <property type="entry name" value="TGS"/>
    <property type="match status" value="1"/>
</dbReference>
<dbReference type="Pfam" id="PF00587">
    <property type="entry name" value="tRNA-synt_2b"/>
    <property type="match status" value="1"/>
</dbReference>
<dbReference type="Pfam" id="PF07973">
    <property type="entry name" value="tRNA_SAD"/>
    <property type="match status" value="1"/>
</dbReference>
<dbReference type="PRINTS" id="PR01047">
    <property type="entry name" value="TRNASYNTHTHR"/>
</dbReference>
<dbReference type="SMART" id="SM00863">
    <property type="entry name" value="tRNA_SAD"/>
    <property type="match status" value="1"/>
</dbReference>
<dbReference type="SUPFAM" id="SSF52954">
    <property type="entry name" value="Class II aaRS ABD-related"/>
    <property type="match status" value="1"/>
</dbReference>
<dbReference type="SUPFAM" id="SSF55681">
    <property type="entry name" value="Class II aaRS and biotin synthetases"/>
    <property type="match status" value="1"/>
</dbReference>
<dbReference type="SUPFAM" id="SSF81271">
    <property type="entry name" value="TGS-like"/>
    <property type="match status" value="1"/>
</dbReference>
<dbReference type="SUPFAM" id="SSF55186">
    <property type="entry name" value="ThrRS/AlaRS common domain"/>
    <property type="match status" value="1"/>
</dbReference>
<dbReference type="PROSITE" id="PS50862">
    <property type="entry name" value="AA_TRNA_LIGASE_II"/>
    <property type="match status" value="1"/>
</dbReference>
<dbReference type="PROSITE" id="PS51880">
    <property type="entry name" value="TGS"/>
    <property type="match status" value="1"/>
</dbReference>
<sequence length="635" mass="71652">MIAITLPDGSRREFPGPVTVAEVAQSIGTGLAKAALAGKVDGNLVDTSYSIDRDVALAIITDKDADGVDVIRHSTAHLLAYAVKELYPDAQVTIGPVIENGFYYDFAYKRPFTPEDLAAIEKKMTELSRKDEKVTREVWNRDEAVALFESMGEKYKAEIIASIPADQEIGLYREGKFVDLCRGPHVPSTGKLKVFKLMKVAGAYWRGDANNEMLQRIYGTAWAKKEDQEAYLHMLEEAEKRDHRKLGKSLDLFHLQEEAPGMVFWHPKGWQVWQAVEQYMRGRLTAAGYDEVRTPQVMDRSLWEKSGHWQNYKENMFVTESEKRDYAIKPMNCPGHVQIFNHGLRSYRDLPLRLAEFGACHRNEPSGALHGLMRVRGFVQDDAHIFCTEEQIVAEAKAFNELAFSVYDDFGFKDVAVKLSLRPAQRAGSDEVWDHAEEGLRLALRACGVDWEELPGEGAFYGPKVEYHIKDAIGRSWQCGTLQLDLVLPERLGAEYVAEDNSRKRPVMLHRAILGSFERFLGILLENHAGALPAWLAPEQVVVMNIAESQAEYAENVVQSLLKQGFRAKADLRNEKITYKIREHSLQKIPYLLVVGDKERDANQVAVRARGNVDLGVMPVSAFVERLQQDVTNKA</sequence>
<reference key="1">
    <citation type="journal article" date="2010" name="PLoS ONE">
        <title>The complete multipartite genome sequence of Cupriavidus necator JMP134, a versatile pollutant degrader.</title>
        <authorList>
            <person name="Lykidis A."/>
            <person name="Perez-Pantoja D."/>
            <person name="Ledger T."/>
            <person name="Mavromatis K."/>
            <person name="Anderson I.J."/>
            <person name="Ivanova N.N."/>
            <person name="Hooper S.D."/>
            <person name="Lapidus A."/>
            <person name="Lucas S."/>
            <person name="Gonzalez B."/>
            <person name="Kyrpides N.C."/>
        </authorList>
    </citation>
    <scope>NUCLEOTIDE SEQUENCE [LARGE SCALE GENOMIC DNA]</scope>
    <source>
        <strain>JMP134 / LMG 1197</strain>
    </source>
</reference>
<comment type="function">
    <text evidence="1">Catalyzes the attachment of threonine to tRNA(Thr) in a two-step reaction: L-threonine is first activated by ATP to form Thr-AMP and then transferred to the acceptor end of tRNA(Thr). Also edits incorrectly charged L-seryl-tRNA(Thr).</text>
</comment>
<comment type="catalytic activity">
    <reaction evidence="1">
        <text>tRNA(Thr) + L-threonine + ATP = L-threonyl-tRNA(Thr) + AMP + diphosphate + H(+)</text>
        <dbReference type="Rhea" id="RHEA:24624"/>
        <dbReference type="Rhea" id="RHEA-COMP:9670"/>
        <dbReference type="Rhea" id="RHEA-COMP:9704"/>
        <dbReference type="ChEBI" id="CHEBI:15378"/>
        <dbReference type="ChEBI" id="CHEBI:30616"/>
        <dbReference type="ChEBI" id="CHEBI:33019"/>
        <dbReference type="ChEBI" id="CHEBI:57926"/>
        <dbReference type="ChEBI" id="CHEBI:78442"/>
        <dbReference type="ChEBI" id="CHEBI:78534"/>
        <dbReference type="ChEBI" id="CHEBI:456215"/>
        <dbReference type="EC" id="6.1.1.3"/>
    </reaction>
</comment>
<comment type="cofactor">
    <cofactor evidence="1">
        <name>Zn(2+)</name>
        <dbReference type="ChEBI" id="CHEBI:29105"/>
    </cofactor>
    <text evidence="1">Binds 1 zinc ion per subunit.</text>
</comment>
<comment type="subunit">
    <text evidence="1">Homodimer.</text>
</comment>
<comment type="subcellular location">
    <subcellularLocation>
        <location evidence="1">Cytoplasm</location>
    </subcellularLocation>
</comment>
<comment type="similarity">
    <text evidence="1">Belongs to the class-II aminoacyl-tRNA synthetase family.</text>
</comment>
<evidence type="ECO:0000255" key="1">
    <source>
        <dbReference type="HAMAP-Rule" id="MF_00184"/>
    </source>
</evidence>
<evidence type="ECO:0000255" key="2">
    <source>
        <dbReference type="PROSITE-ProRule" id="PRU01228"/>
    </source>
</evidence>
<organism>
    <name type="scientific">Cupriavidus pinatubonensis (strain JMP 134 / LMG 1197)</name>
    <name type="common">Cupriavidus necator (strain JMP 134)</name>
    <dbReference type="NCBI Taxonomy" id="264198"/>
    <lineage>
        <taxon>Bacteria</taxon>
        <taxon>Pseudomonadati</taxon>
        <taxon>Pseudomonadota</taxon>
        <taxon>Betaproteobacteria</taxon>
        <taxon>Burkholderiales</taxon>
        <taxon>Burkholderiaceae</taxon>
        <taxon>Cupriavidus</taxon>
    </lineage>
</organism>
<proteinExistence type="inferred from homology"/>
<name>SYT_CUPPJ</name>
<accession>Q472N7</accession>
<keyword id="KW-0030">Aminoacyl-tRNA synthetase</keyword>
<keyword id="KW-0067">ATP-binding</keyword>
<keyword id="KW-0963">Cytoplasm</keyword>
<keyword id="KW-0436">Ligase</keyword>
<keyword id="KW-0479">Metal-binding</keyword>
<keyword id="KW-0547">Nucleotide-binding</keyword>
<keyword id="KW-0648">Protein biosynthesis</keyword>
<keyword id="KW-0694">RNA-binding</keyword>
<keyword id="KW-0820">tRNA-binding</keyword>
<keyword id="KW-0862">Zinc</keyword>
<protein>
    <recommendedName>
        <fullName evidence="1">Threonine--tRNA ligase</fullName>
        <ecNumber evidence="1">6.1.1.3</ecNumber>
    </recommendedName>
    <alternativeName>
        <fullName evidence="1">Threonyl-tRNA synthetase</fullName>
        <shortName evidence="1">ThrRS</shortName>
    </alternativeName>
</protein>
<feature type="chain" id="PRO_1000020485" description="Threonine--tRNA ligase">
    <location>
        <begin position="1"/>
        <end position="635"/>
    </location>
</feature>
<feature type="domain" description="TGS" evidence="2">
    <location>
        <begin position="1"/>
        <end position="61"/>
    </location>
</feature>
<feature type="region of interest" description="Catalytic" evidence="1">
    <location>
        <begin position="242"/>
        <end position="533"/>
    </location>
</feature>
<feature type="binding site" evidence="1">
    <location>
        <position position="333"/>
    </location>
    <ligand>
        <name>Zn(2+)</name>
        <dbReference type="ChEBI" id="CHEBI:29105"/>
    </ligand>
</feature>
<feature type="binding site" evidence="1">
    <location>
        <position position="384"/>
    </location>
    <ligand>
        <name>Zn(2+)</name>
        <dbReference type="ChEBI" id="CHEBI:29105"/>
    </ligand>
</feature>
<feature type="binding site" evidence="1">
    <location>
        <position position="510"/>
    </location>
    <ligand>
        <name>Zn(2+)</name>
        <dbReference type="ChEBI" id="CHEBI:29105"/>
    </ligand>
</feature>